<dbReference type="EMBL" id="CP000029">
    <property type="protein sequence ID" value="AAW54721.1"/>
    <property type="molecule type" value="Genomic_DNA"/>
</dbReference>
<dbReference type="STRING" id="176279.SERP1356"/>
<dbReference type="KEGG" id="ser:SERP1356"/>
<dbReference type="eggNOG" id="COG0759">
    <property type="taxonomic scope" value="Bacteria"/>
</dbReference>
<dbReference type="HOGENOM" id="CLU_144811_6_0_9"/>
<dbReference type="Proteomes" id="UP000000531">
    <property type="component" value="Chromosome"/>
</dbReference>
<dbReference type="GO" id="GO:0005886">
    <property type="term" value="C:plasma membrane"/>
    <property type="evidence" value="ECO:0007669"/>
    <property type="project" value="UniProtKB-SubCell"/>
</dbReference>
<dbReference type="HAMAP" id="MF_00386">
    <property type="entry name" value="UPF0161_YidD"/>
    <property type="match status" value="1"/>
</dbReference>
<dbReference type="InterPro" id="IPR002696">
    <property type="entry name" value="Membr_insert_effic_factor_YidD"/>
</dbReference>
<dbReference type="NCBIfam" id="TIGR00278">
    <property type="entry name" value="membrane protein insertion efficiency factor YidD"/>
    <property type="match status" value="1"/>
</dbReference>
<dbReference type="PANTHER" id="PTHR33383">
    <property type="entry name" value="MEMBRANE PROTEIN INSERTION EFFICIENCY FACTOR-RELATED"/>
    <property type="match status" value="1"/>
</dbReference>
<dbReference type="PANTHER" id="PTHR33383:SF1">
    <property type="entry name" value="MEMBRANE PROTEIN INSERTION EFFICIENCY FACTOR-RELATED"/>
    <property type="match status" value="1"/>
</dbReference>
<dbReference type="Pfam" id="PF01809">
    <property type="entry name" value="YidD"/>
    <property type="match status" value="1"/>
</dbReference>
<dbReference type="SMART" id="SM01234">
    <property type="entry name" value="Haemolytic"/>
    <property type="match status" value="1"/>
</dbReference>
<evidence type="ECO:0000255" key="1">
    <source>
        <dbReference type="HAMAP-Rule" id="MF_00386"/>
    </source>
</evidence>
<evidence type="ECO:0000256" key="2">
    <source>
        <dbReference type="SAM" id="MobiDB-lite"/>
    </source>
</evidence>
<protein>
    <recommendedName>
        <fullName evidence="1">Putative membrane protein insertion efficiency factor</fullName>
    </recommendedName>
</protein>
<proteinExistence type="inferred from homology"/>
<keyword id="KW-1003">Cell membrane</keyword>
<keyword id="KW-0472">Membrane</keyword>
<keyword id="KW-1185">Reference proteome</keyword>
<name>YIDD_STAEQ</name>
<accession>Q5HNB4</accession>
<feature type="chain" id="PRO_0000171873" description="Putative membrane protein insertion efficiency factor">
    <location>
        <begin position="1"/>
        <end position="82"/>
    </location>
</feature>
<feature type="region of interest" description="Disordered" evidence="2">
    <location>
        <begin position="63"/>
        <end position="82"/>
    </location>
</feature>
<comment type="function">
    <text evidence="1">Could be involved in insertion of integral membrane proteins into the membrane.</text>
</comment>
<comment type="subcellular location">
    <subcellularLocation>
        <location evidence="1">Cell membrane</location>
        <topology evidence="1">Peripheral membrane protein</topology>
        <orientation evidence="1">Cytoplasmic side</orientation>
    </subcellularLocation>
</comment>
<comment type="similarity">
    <text evidence="1">Belongs to the UPF0161 family.</text>
</comment>
<gene>
    <name type="ordered locus">SERP1356</name>
</gene>
<reference key="1">
    <citation type="journal article" date="2005" name="J. Bacteriol.">
        <title>Insights on evolution of virulence and resistance from the complete genome analysis of an early methicillin-resistant Staphylococcus aureus strain and a biofilm-producing methicillin-resistant Staphylococcus epidermidis strain.</title>
        <authorList>
            <person name="Gill S.R."/>
            <person name="Fouts D.E."/>
            <person name="Archer G.L."/>
            <person name="Mongodin E.F."/>
            <person name="DeBoy R.T."/>
            <person name="Ravel J."/>
            <person name="Paulsen I.T."/>
            <person name="Kolonay J.F."/>
            <person name="Brinkac L.M."/>
            <person name="Beanan M.J."/>
            <person name="Dodson R.J."/>
            <person name="Daugherty S.C."/>
            <person name="Madupu R."/>
            <person name="Angiuoli S.V."/>
            <person name="Durkin A.S."/>
            <person name="Haft D.H."/>
            <person name="Vamathevan J.J."/>
            <person name="Khouri H."/>
            <person name="Utterback T.R."/>
            <person name="Lee C."/>
            <person name="Dimitrov G."/>
            <person name="Jiang L."/>
            <person name="Qin H."/>
            <person name="Weidman J."/>
            <person name="Tran K."/>
            <person name="Kang K.H."/>
            <person name="Hance I.R."/>
            <person name="Nelson K.E."/>
            <person name="Fraser C.M."/>
        </authorList>
    </citation>
    <scope>NUCLEOTIDE SEQUENCE [LARGE SCALE GENOMIC DNA]</scope>
    <source>
        <strain>ATCC 35984 / DSM 28319 / BCRC 17069 / CCUG 31568 / BM 3577 / RP62A</strain>
    </source>
</reference>
<sequence>MKKILLSLVVFYQRFISPLTPPTCRFYPTCSQYTREAIEYHGALKGLYLGVRRILKCHPLHKGGFDPVPLKKDKNSKTTHHH</sequence>
<organism>
    <name type="scientific">Staphylococcus epidermidis (strain ATCC 35984 / DSM 28319 / BCRC 17069 / CCUG 31568 / BM 3577 / RP62A)</name>
    <dbReference type="NCBI Taxonomy" id="176279"/>
    <lineage>
        <taxon>Bacteria</taxon>
        <taxon>Bacillati</taxon>
        <taxon>Bacillota</taxon>
        <taxon>Bacilli</taxon>
        <taxon>Bacillales</taxon>
        <taxon>Staphylococcaceae</taxon>
        <taxon>Staphylococcus</taxon>
    </lineage>
</organism>